<accession>Q2L270</accession>
<proteinExistence type="inferred from homology"/>
<name>RL6_BORA1</name>
<feature type="chain" id="PRO_0000265220" description="Large ribosomal subunit protein uL6">
    <location>
        <begin position="1"/>
        <end position="177"/>
    </location>
</feature>
<gene>
    <name evidence="1" type="primary">rplF</name>
    <name type="ordered locus">BAV0049</name>
</gene>
<protein>
    <recommendedName>
        <fullName evidence="1">Large ribosomal subunit protein uL6</fullName>
    </recommendedName>
    <alternativeName>
        <fullName evidence="2">50S ribosomal protein L6</fullName>
    </alternativeName>
</protein>
<comment type="function">
    <text evidence="1">This protein binds to the 23S rRNA, and is important in its secondary structure. It is located near the subunit interface in the base of the L7/L12 stalk, and near the tRNA binding site of the peptidyltransferase center.</text>
</comment>
<comment type="subunit">
    <text evidence="1">Part of the 50S ribosomal subunit.</text>
</comment>
<comment type="similarity">
    <text evidence="1">Belongs to the universal ribosomal protein uL6 family.</text>
</comment>
<organism>
    <name type="scientific">Bordetella avium (strain 197N)</name>
    <dbReference type="NCBI Taxonomy" id="360910"/>
    <lineage>
        <taxon>Bacteria</taxon>
        <taxon>Pseudomonadati</taxon>
        <taxon>Pseudomonadota</taxon>
        <taxon>Betaproteobacteria</taxon>
        <taxon>Burkholderiales</taxon>
        <taxon>Alcaligenaceae</taxon>
        <taxon>Bordetella</taxon>
    </lineage>
</organism>
<evidence type="ECO:0000255" key="1">
    <source>
        <dbReference type="HAMAP-Rule" id="MF_01365"/>
    </source>
</evidence>
<evidence type="ECO:0000305" key="2"/>
<sequence length="177" mass="18995">MSRIAKYPVELPKGVEASIQQDQITVKGPLGTLVQALTGDVNIVEDAGKLTFAAANDSRHANAMSGTVRALVANMVTGVSKGFERKLTLVGVGYRASVQGEAVKLQLGFSHDILHKLPAGIKAECPTQTEIVIKGANKQVVGQVAAEIRAYREPEPYKGKGVRYADERVVIKETKKK</sequence>
<keyword id="KW-1185">Reference proteome</keyword>
<keyword id="KW-0687">Ribonucleoprotein</keyword>
<keyword id="KW-0689">Ribosomal protein</keyword>
<keyword id="KW-0694">RNA-binding</keyword>
<keyword id="KW-0699">rRNA-binding</keyword>
<reference key="1">
    <citation type="journal article" date="2006" name="J. Bacteriol.">
        <title>Comparison of the genome sequence of the poultry pathogen Bordetella avium with those of B. bronchiseptica, B. pertussis, and B. parapertussis reveals extensive diversity in surface structures associated with host interaction.</title>
        <authorList>
            <person name="Sebaihia M."/>
            <person name="Preston A."/>
            <person name="Maskell D.J."/>
            <person name="Kuzmiak H."/>
            <person name="Connell T.D."/>
            <person name="King N.D."/>
            <person name="Orndorff P.E."/>
            <person name="Miyamoto D.M."/>
            <person name="Thomson N.R."/>
            <person name="Harris D."/>
            <person name="Goble A."/>
            <person name="Lord A."/>
            <person name="Murphy L."/>
            <person name="Quail M.A."/>
            <person name="Rutter S."/>
            <person name="Squares R."/>
            <person name="Squares S."/>
            <person name="Woodward J."/>
            <person name="Parkhill J."/>
            <person name="Temple L.M."/>
        </authorList>
    </citation>
    <scope>NUCLEOTIDE SEQUENCE [LARGE SCALE GENOMIC DNA]</scope>
    <source>
        <strain>197N</strain>
    </source>
</reference>
<dbReference type="EMBL" id="AM167904">
    <property type="protein sequence ID" value="CAJ47633.1"/>
    <property type="molecule type" value="Genomic_DNA"/>
</dbReference>
<dbReference type="RefSeq" id="WP_012415755.1">
    <property type="nucleotide sequence ID" value="NC_010645.1"/>
</dbReference>
<dbReference type="SMR" id="Q2L270"/>
<dbReference type="STRING" id="360910.BAV0049"/>
<dbReference type="GeneID" id="92936706"/>
<dbReference type="KEGG" id="bav:BAV0049"/>
<dbReference type="eggNOG" id="COG0097">
    <property type="taxonomic scope" value="Bacteria"/>
</dbReference>
<dbReference type="HOGENOM" id="CLU_065464_1_2_4"/>
<dbReference type="OrthoDB" id="9805007at2"/>
<dbReference type="Proteomes" id="UP000001977">
    <property type="component" value="Chromosome"/>
</dbReference>
<dbReference type="GO" id="GO:0022625">
    <property type="term" value="C:cytosolic large ribosomal subunit"/>
    <property type="evidence" value="ECO:0007669"/>
    <property type="project" value="TreeGrafter"/>
</dbReference>
<dbReference type="GO" id="GO:0019843">
    <property type="term" value="F:rRNA binding"/>
    <property type="evidence" value="ECO:0007669"/>
    <property type="project" value="UniProtKB-UniRule"/>
</dbReference>
<dbReference type="GO" id="GO:0003735">
    <property type="term" value="F:structural constituent of ribosome"/>
    <property type="evidence" value="ECO:0007669"/>
    <property type="project" value="InterPro"/>
</dbReference>
<dbReference type="GO" id="GO:0002181">
    <property type="term" value="P:cytoplasmic translation"/>
    <property type="evidence" value="ECO:0007669"/>
    <property type="project" value="TreeGrafter"/>
</dbReference>
<dbReference type="FunFam" id="3.90.930.12:FF:000001">
    <property type="entry name" value="50S ribosomal protein L6"/>
    <property type="match status" value="1"/>
</dbReference>
<dbReference type="FunFam" id="3.90.930.12:FF:000002">
    <property type="entry name" value="50S ribosomal protein L6"/>
    <property type="match status" value="1"/>
</dbReference>
<dbReference type="Gene3D" id="3.90.930.12">
    <property type="entry name" value="Ribosomal protein L6, alpha-beta domain"/>
    <property type="match status" value="2"/>
</dbReference>
<dbReference type="HAMAP" id="MF_01365_B">
    <property type="entry name" value="Ribosomal_uL6_B"/>
    <property type="match status" value="1"/>
</dbReference>
<dbReference type="InterPro" id="IPR000702">
    <property type="entry name" value="Ribosomal_uL6-like"/>
</dbReference>
<dbReference type="InterPro" id="IPR036789">
    <property type="entry name" value="Ribosomal_uL6-like_a/b-dom_sf"/>
</dbReference>
<dbReference type="InterPro" id="IPR020040">
    <property type="entry name" value="Ribosomal_uL6_a/b-dom"/>
</dbReference>
<dbReference type="InterPro" id="IPR019906">
    <property type="entry name" value="Ribosomal_uL6_bac-type"/>
</dbReference>
<dbReference type="InterPro" id="IPR002358">
    <property type="entry name" value="Ribosomal_uL6_CS"/>
</dbReference>
<dbReference type="NCBIfam" id="TIGR03654">
    <property type="entry name" value="L6_bact"/>
    <property type="match status" value="1"/>
</dbReference>
<dbReference type="PANTHER" id="PTHR11655">
    <property type="entry name" value="60S/50S RIBOSOMAL PROTEIN L6/L9"/>
    <property type="match status" value="1"/>
</dbReference>
<dbReference type="PANTHER" id="PTHR11655:SF14">
    <property type="entry name" value="LARGE RIBOSOMAL SUBUNIT PROTEIN UL6M"/>
    <property type="match status" value="1"/>
</dbReference>
<dbReference type="Pfam" id="PF00347">
    <property type="entry name" value="Ribosomal_L6"/>
    <property type="match status" value="2"/>
</dbReference>
<dbReference type="PIRSF" id="PIRSF002162">
    <property type="entry name" value="Ribosomal_L6"/>
    <property type="match status" value="1"/>
</dbReference>
<dbReference type="PRINTS" id="PR00059">
    <property type="entry name" value="RIBOSOMALL6"/>
</dbReference>
<dbReference type="SUPFAM" id="SSF56053">
    <property type="entry name" value="Ribosomal protein L6"/>
    <property type="match status" value="2"/>
</dbReference>
<dbReference type="PROSITE" id="PS00525">
    <property type="entry name" value="RIBOSOMAL_L6_1"/>
    <property type="match status" value="1"/>
</dbReference>